<organism>
    <name type="scientific">Bacillus velezensis (strain DSM 23117 / BGSC 10A6 / LMG 26770 / FZB42)</name>
    <name type="common">Bacillus amyloliquefaciens subsp. plantarum</name>
    <dbReference type="NCBI Taxonomy" id="326423"/>
    <lineage>
        <taxon>Bacteria</taxon>
        <taxon>Bacillati</taxon>
        <taxon>Bacillota</taxon>
        <taxon>Bacilli</taxon>
        <taxon>Bacillales</taxon>
        <taxon>Bacillaceae</taxon>
        <taxon>Bacillus</taxon>
        <taxon>Bacillus amyloliquefaciens group</taxon>
    </lineage>
</organism>
<gene>
    <name evidence="1" type="primary">mtnA</name>
    <name type="ordered locus">RBAM_013330</name>
</gene>
<evidence type="ECO:0000255" key="1">
    <source>
        <dbReference type="HAMAP-Rule" id="MF_01678"/>
    </source>
</evidence>
<evidence type="ECO:0000305" key="2"/>
<dbReference type="EC" id="5.3.1.23" evidence="1"/>
<dbReference type="EMBL" id="CP000560">
    <property type="protein sequence ID" value="ABS73696.1"/>
    <property type="molecule type" value="Genomic_DNA"/>
</dbReference>
<dbReference type="RefSeq" id="WP_012117409.1">
    <property type="nucleotide sequence ID" value="NC_009725.2"/>
</dbReference>
<dbReference type="SMR" id="A7Z3X0"/>
<dbReference type="GeneID" id="93080468"/>
<dbReference type="KEGG" id="bay:RBAM_013330"/>
<dbReference type="HOGENOM" id="CLU_016218_1_2_9"/>
<dbReference type="UniPathway" id="UPA00904">
    <property type="reaction ID" value="UER00874"/>
</dbReference>
<dbReference type="Proteomes" id="UP000001120">
    <property type="component" value="Chromosome"/>
</dbReference>
<dbReference type="GO" id="GO:0046523">
    <property type="term" value="F:S-methyl-5-thioribose-1-phosphate isomerase activity"/>
    <property type="evidence" value="ECO:0007669"/>
    <property type="project" value="UniProtKB-UniRule"/>
</dbReference>
<dbReference type="GO" id="GO:0019509">
    <property type="term" value="P:L-methionine salvage from methylthioadenosine"/>
    <property type="evidence" value="ECO:0007669"/>
    <property type="project" value="UniProtKB-UniRule"/>
</dbReference>
<dbReference type="FunFam" id="1.20.120.420:FF:000003">
    <property type="entry name" value="Methylthioribose-1-phosphate isomerase"/>
    <property type="match status" value="1"/>
</dbReference>
<dbReference type="FunFam" id="3.40.50.10470:FF:000006">
    <property type="entry name" value="Methylthioribose-1-phosphate isomerase"/>
    <property type="match status" value="1"/>
</dbReference>
<dbReference type="Gene3D" id="1.20.120.420">
    <property type="entry name" value="translation initiation factor eif-2b, domain 1"/>
    <property type="match status" value="1"/>
</dbReference>
<dbReference type="Gene3D" id="3.40.50.10470">
    <property type="entry name" value="Translation initiation factor eif-2b, domain 2"/>
    <property type="match status" value="1"/>
</dbReference>
<dbReference type="HAMAP" id="MF_01678">
    <property type="entry name" value="Salvage_MtnA"/>
    <property type="match status" value="1"/>
</dbReference>
<dbReference type="InterPro" id="IPR000649">
    <property type="entry name" value="IF-2B-related"/>
</dbReference>
<dbReference type="InterPro" id="IPR005251">
    <property type="entry name" value="IF-M1Pi"/>
</dbReference>
<dbReference type="InterPro" id="IPR042529">
    <property type="entry name" value="IF_2B-like_C"/>
</dbReference>
<dbReference type="InterPro" id="IPR011559">
    <property type="entry name" value="Initiation_fac_2B_a/b/d"/>
</dbReference>
<dbReference type="InterPro" id="IPR027363">
    <property type="entry name" value="M1Pi_N"/>
</dbReference>
<dbReference type="InterPro" id="IPR037171">
    <property type="entry name" value="NagB/RpiA_transferase-like"/>
</dbReference>
<dbReference type="NCBIfam" id="TIGR00524">
    <property type="entry name" value="eIF-2B_rel"/>
    <property type="match status" value="1"/>
</dbReference>
<dbReference type="NCBIfam" id="NF004326">
    <property type="entry name" value="PRK05720.1"/>
    <property type="match status" value="1"/>
</dbReference>
<dbReference type="NCBIfam" id="TIGR00512">
    <property type="entry name" value="salvage_mtnA"/>
    <property type="match status" value="1"/>
</dbReference>
<dbReference type="PANTHER" id="PTHR43475">
    <property type="entry name" value="METHYLTHIORIBOSE-1-PHOSPHATE ISOMERASE"/>
    <property type="match status" value="1"/>
</dbReference>
<dbReference type="PANTHER" id="PTHR43475:SF4">
    <property type="entry name" value="METHYLTHIORIBOSE-1-PHOSPHATE ISOMERASE"/>
    <property type="match status" value="1"/>
</dbReference>
<dbReference type="Pfam" id="PF01008">
    <property type="entry name" value="IF-2B"/>
    <property type="match status" value="1"/>
</dbReference>
<dbReference type="SUPFAM" id="SSF100950">
    <property type="entry name" value="NagB/RpiA/CoA transferase-like"/>
    <property type="match status" value="1"/>
</dbReference>
<proteinExistence type="inferred from homology"/>
<name>MTNA_BACVZ</name>
<feature type="chain" id="PRO_0000357140" description="Methylthioribose-1-phosphate isomerase">
    <location>
        <begin position="1"/>
        <end position="353"/>
    </location>
</feature>
<feature type="active site" description="Proton donor" evidence="1">
    <location>
        <position position="240"/>
    </location>
</feature>
<feature type="binding site" evidence="1">
    <location>
        <begin position="51"/>
        <end position="53"/>
    </location>
    <ligand>
        <name>substrate</name>
    </ligand>
</feature>
<feature type="binding site" evidence="1">
    <location>
        <position position="94"/>
    </location>
    <ligand>
        <name>substrate</name>
    </ligand>
</feature>
<feature type="binding site" evidence="1">
    <location>
        <position position="199"/>
    </location>
    <ligand>
        <name>substrate</name>
    </ligand>
</feature>
<feature type="binding site" evidence="1">
    <location>
        <begin position="250"/>
        <end position="251"/>
    </location>
    <ligand>
        <name>substrate</name>
    </ligand>
</feature>
<feature type="site" description="Transition state stabilizer" evidence="1">
    <location>
        <position position="160"/>
    </location>
</feature>
<comment type="function">
    <text evidence="1">Catalyzes the interconversion of methylthioribose-1-phosphate (MTR-1-P) into methylthioribulose-1-phosphate (MTRu-1-P).</text>
</comment>
<comment type="catalytic activity">
    <reaction evidence="1">
        <text>5-(methylsulfanyl)-alpha-D-ribose 1-phosphate = 5-(methylsulfanyl)-D-ribulose 1-phosphate</text>
        <dbReference type="Rhea" id="RHEA:19989"/>
        <dbReference type="ChEBI" id="CHEBI:58533"/>
        <dbReference type="ChEBI" id="CHEBI:58548"/>
        <dbReference type="EC" id="5.3.1.23"/>
    </reaction>
</comment>
<comment type="pathway">
    <text evidence="1">Amino-acid biosynthesis; L-methionine biosynthesis via salvage pathway; L-methionine from S-methyl-5-thio-alpha-D-ribose 1-phosphate: step 1/6.</text>
</comment>
<comment type="subunit">
    <text>Homodimer.</text>
</comment>
<comment type="similarity">
    <text evidence="2">Belongs to the eIF-2B alpha/beta/delta subunits family. MtnA subfamily.</text>
</comment>
<accession>A7Z3X0</accession>
<reference key="1">
    <citation type="journal article" date="2007" name="Nat. Biotechnol.">
        <title>Comparative analysis of the complete genome sequence of the plant growth-promoting bacterium Bacillus amyloliquefaciens FZB42.</title>
        <authorList>
            <person name="Chen X.H."/>
            <person name="Koumoutsi A."/>
            <person name="Scholz R."/>
            <person name="Eisenreich A."/>
            <person name="Schneider K."/>
            <person name="Heinemeyer I."/>
            <person name="Morgenstern B."/>
            <person name="Voss B."/>
            <person name="Hess W.R."/>
            <person name="Reva O."/>
            <person name="Junge H."/>
            <person name="Voigt B."/>
            <person name="Jungblut P.R."/>
            <person name="Vater J."/>
            <person name="Suessmuth R."/>
            <person name="Liesegang H."/>
            <person name="Strittmatter A."/>
            <person name="Gottschalk G."/>
            <person name="Borriss R."/>
        </authorList>
    </citation>
    <scope>NUCLEOTIDE SEQUENCE [LARGE SCALE GENOMIC DNA]</scope>
    <source>
        <strain>DSM 23117 / BGSC 10A6 / LMG 26770 / FZB42</strain>
    </source>
</reference>
<keyword id="KW-0028">Amino-acid biosynthesis</keyword>
<keyword id="KW-0413">Isomerase</keyword>
<keyword id="KW-0486">Methionine biosynthesis</keyword>
<protein>
    <recommendedName>
        <fullName evidence="1">Methylthioribose-1-phosphate isomerase</fullName>
        <shortName evidence="1">M1Pi</shortName>
        <shortName evidence="1">MTR-1-P isomerase</shortName>
        <ecNumber evidence="1">5.3.1.23</ecNumber>
    </recommendedName>
    <alternativeName>
        <fullName evidence="1">S-methyl-5-thioribose-1-phosphate isomerase</fullName>
    </alternativeName>
</protein>
<sequence length="353" mass="38859">MTNEFAIPRSVEWKETYIRILNQQKLPDVTEYVELETKEDVFDAIVTLKVRGAPAIGITAAFGLALSAKSFEARDLSDFRRQFADVKTYLNSSRPTAVNLAWALDRLTDSIRDAISINEAKTTLVHEAIQIQIEDEETCRMIGQNALHLFKKGDQIMTICNAGSIATSRYGTALAPFYLAKQKDLGLHIYACETRPVLQGSRLTAWELMQGGIDVTLITDSMAAHTMKEKHISAVIVGADRIAKNGDTANKIGTYGLAILANAFQIPFFVAAPLSTFDLQIENGDQIPIEERDPDEVRQISGIRTAPEDVPVFNPAFDITPGSLISGIITEKGIVTGSYTEEIEQLFADCQLS</sequence>